<sequence>MISIKVLFFGEACQLVGKREEAIDFPEETDYEEIRKTILENYPALQKIEKVMMLAVDQEYANPGDRFELVRFTEIAVIPPLSGG</sequence>
<comment type="function">
    <text evidence="1">Acts as a sulfur carrier required for molybdopterin biosynthesis. Component of the molybdopterin synthase complex that catalyzes the conversion of precursor Z into molybdopterin by mediating the incorporation of 2 sulfur atoms into precursor Z to generate a dithiolene group. In the complex, serves as sulfur donor by being thiocarboxylated (-COSH) at its C-terminus by MOCS3. After interaction with MOCS2B, the sulfur is then transferred to precursor Z to form molybdopterin.</text>
</comment>
<comment type="pathway">
    <text evidence="1">Cofactor biosynthesis; molybdopterin biosynthesis.</text>
</comment>
<comment type="subunit">
    <text evidence="1">Heterotetramer; composed of 2 small (MOCS2A) and 2 large (MOCS2B) subunits.</text>
</comment>
<comment type="subcellular location">
    <subcellularLocation>
        <location evidence="1">Cytoplasm</location>
    </subcellularLocation>
</comment>
<comment type="PTM">
    <text evidence="1">C-terminal thiocarboxylation occurs in 2 steps, it is first acyl-adenylated (-COAMP) via the hesA/moeB/thiF part of MOCS3, then thiocarboxylated (-COSH) via the rhodanese domain of MOCS3.</text>
</comment>
<comment type="similarity">
    <text evidence="1">Belongs to the MoaD family. MOCS2A subfamily.</text>
</comment>
<proteinExistence type="inferred from homology"/>
<keyword id="KW-0963">Cytoplasm</keyword>
<keyword id="KW-0501">Molybdenum cofactor biosynthesis</keyword>
<keyword id="KW-0547">Nucleotide-binding</keyword>
<keyword id="KW-0597">Phosphoprotein</keyword>
<keyword id="KW-1185">Reference proteome</keyword>
<organism>
    <name type="scientific">Caenorhabditis elegans</name>
    <dbReference type="NCBI Taxonomy" id="6239"/>
    <lineage>
        <taxon>Eukaryota</taxon>
        <taxon>Metazoa</taxon>
        <taxon>Ecdysozoa</taxon>
        <taxon>Nematoda</taxon>
        <taxon>Chromadorea</taxon>
        <taxon>Rhabditida</taxon>
        <taxon>Rhabditina</taxon>
        <taxon>Rhabditomorpha</taxon>
        <taxon>Rhabditoidea</taxon>
        <taxon>Rhabditidae</taxon>
        <taxon>Peloderinae</taxon>
        <taxon>Caenorhabditis</taxon>
    </lineage>
</organism>
<dbReference type="EMBL" id="FO081618">
    <property type="protein sequence ID" value="CCD72862.1"/>
    <property type="molecule type" value="Genomic_DNA"/>
</dbReference>
<dbReference type="PIR" id="F88451">
    <property type="entry name" value="F88451"/>
</dbReference>
<dbReference type="RefSeq" id="NP_498102.1">
    <property type="nucleotide sequence ID" value="NM_065701.5"/>
</dbReference>
<dbReference type="SMR" id="Q09412"/>
<dbReference type="BioGRID" id="51967">
    <property type="interactions" value="1"/>
</dbReference>
<dbReference type="FunCoup" id="Q09412">
    <property type="interactions" value="87"/>
</dbReference>
<dbReference type="STRING" id="6239.K10D2.7.1"/>
<dbReference type="PaxDb" id="6239-K10D2.7"/>
<dbReference type="PeptideAtlas" id="Q09412"/>
<dbReference type="EnsemblMetazoa" id="K10D2.7.1">
    <property type="protein sequence ID" value="K10D2.7.1"/>
    <property type="gene ID" value="WBGene00019633"/>
</dbReference>
<dbReference type="GeneID" id="187263"/>
<dbReference type="KEGG" id="cel:CELE_K10D2.7"/>
<dbReference type="UCSC" id="K10D2.7">
    <property type="organism name" value="c. elegans"/>
</dbReference>
<dbReference type="AGR" id="WB:WBGene00019633"/>
<dbReference type="CTD" id="187263"/>
<dbReference type="WormBase" id="K10D2.7">
    <property type="protein sequence ID" value="CE02019"/>
    <property type="gene ID" value="WBGene00019633"/>
    <property type="gene designation" value="moc-6"/>
</dbReference>
<dbReference type="eggNOG" id="KOG3474">
    <property type="taxonomic scope" value="Eukaryota"/>
</dbReference>
<dbReference type="HOGENOM" id="CLU_114601_4_3_1"/>
<dbReference type="InParanoid" id="Q09412"/>
<dbReference type="OMA" id="DQEYANP"/>
<dbReference type="OrthoDB" id="5531344at2759"/>
<dbReference type="PhylomeDB" id="Q09412"/>
<dbReference type="UniPathway" id="UPA00344"/>
<dbReference type="PRO" id="PR:Q09412"/>
<dbReference type="Proteomes" id="UP000001940">
    <property type="component" value="Chromosome III"/>
</dbReference>
<dbReference type="Bgee" id="WBGene00019633">
    <property type="expression patterns" value="Expressed in pharyngeal muscle cell (C elegans) and 3 other cell types or tissues"/>
</dbReference>
<dbReference type="GO" id="GO:0005829">
    <property type="term" value="C:cytosol"/>
    <property type="evidence" value="ECO:0000250"/>
    <property type="project" value="UniProtKB"/>
</dbReference>
<dbReference type="GO" id="GO:1990133">
    <property type="term" value="C:molybdopterin adenylyltransferase complex"/>
    <property type="evidence" value="ECO:0000318"/>
    <property type="project" value="GO_Central"/>
</dbReference>
<dbReference type="GO" id="GO:1990140">
    <property type="term" value="C:molybdopterin synthase complex"/>
    <property type="evidence" value="ECO:0000250"/>
    <property type="project" value="UniProtKB"/>
</dbReference>
<dbReference type="GO" id="GO:0030366">
    <property type="term" value="F:molybdopterin synthase activity"/>
    <property type="evidence" value="ECO:0007669"/>
    <property type="project" value="UniProtKB-UniRule"/>
</dbReference>
<dbReference type="GO" id="GO:0000166">
    <property type="term" value="F:nucleotide binding"/>
    <property type="evidence" value="ECO:0007669"/>
    <property type="project" value="UniProtKB-KW"/>
</dbReference>
<dbReference type="GO" id="GO:0006777">
    <property type="term" value="P:Mo-molybdopterin cofactor biosynthetic process"/>
    <property type="evidence" value="ECO:0000250"/>
    <property type="project" value="UniProtKB"/>
</dbReference>
<dbReference type="CDD" id="cd00754">
    <property type="entry name" value="Ubl_MoaD"/>
    <property type="match status" value="1"/>
</dbReference>
<dbReference type="FunFam" id="3.10.20.30:FF:000010">
    <property type="entry name" value="Molybdopterin synthase sulfur carrier subunit"/>
    <property type="match status" value="1"/>
</dbReference>
<dbReference type="Gene3D" id="3.10.20.30">
    <property type="match status" value="1"/>
</dbReference>
<dbReference type="HAMAP" id="MF_03051">
    <property type="entry name" value="MOCS2A"/>
    <property type="match status" value="1"/>
</dbReference>
<dbReference type="InterPro" id="IPR012675">
    <property type="entry name" value="Beta-grasp_dom_sf"/>
</dbReference>
<dbReference type="InterPro" id="IPR044672">
    <property type="entry name" value="MOCS2A"/>
</dbReference>
<dbReference type="InterPro" id="IPR028887">
    <property type="entry name" value="MOCS2A_euk"/>
</dbReference>
<dbReference type="InterPro" id="IPR016155">
    <property type="entry name" value="Mopterin_synth/thiamin_S_b"/>
</dbReference>
<dbReference type="InterPro" id="IPR003749">
    <property type="entry name" value="ThiS/MoaD-like"/>
</dbReference>
<dbReference type="PANTHER" id="PTHR33359">
    <property type="entry name" value="MOLYBDOPTERIN SYNTHASE SULFUR CARRIER SUBUNIT"/>
    <property type="match status" value="1"/>
</dbReference>
<dbReference type="PANTHER" id="PTHR33359:SF1">
    <property type="entry name" value="MOLYBDOPTERIN SYNTHASE SULFUR CARRIER SUBUNIT"/>
    <property type="match status" value="1"/>
</dbReference>
<dbReference type="Pfam" id="PF02597">
    <property type="entry name" value="ThiS"/>
    <property type="match status" value="1"/>
</dbReference>
<dbReference type="SUPFAM" id="SSF54285">
    <property type="entry name" value="MoaD/ThiS"/>
    <property type="match status" value="1"/>
</dbReference>
<protein>
    <recommendedName>
        <fullName evidence="1">Molybdopterin synthase sulfur carrier subunit</fullName>
    </recommendedName>
    <alternativeName>
        <fullName evidence="1">Molybdenum cofactor synthesis protein 2 small subunit</fullName>
    </alternativeName>
    <alternativeName>
        <fullName evidence="1">Molybdenum cofactor synthesis protein 2A</fullName>
        <shortName evidence="1">MOCS2A</shortName>
    </alternativeName>
    <alternativeName>
        <fullName evidence="1">Sulfur carrier protein MOCS2A</fullName>
    </alternativeName>
</protein>
<feature type="chain" id="PRO_0000065408" description="Molybdopterin synthase sulfur carrier subunit">
    <location>
        <begin position="1"/>
        <end position="84"/>
    </location>
</feature>
<feature type="modified residue" description="1-thioglycine; alternate" evidence="1">
    <location>
        <position position="84"/>
    </location>
</feature>
<feature type="modified residue" description="Glycyl adenylate; alternate" evidence="1">
    <location>
        <position position="84"/>
    </location>
</feature>
<accession>Q09412</accession>
<gene>
    <name evidence="2" type="primary">moc-6</name>
    <name type="ORF">K10D2.7</name>
</gene>
<evidence type="ECO:0000255" key="1">
    <source>
        <dbReference type="HAMAP-Rule" id="MF_03051"/>
    </source>
</evidence>
<evidence type="ECO:0000312" key="2">
    <source>
        <dbReference type="WormBase" id="K10D2.7"/>
    </source>
</evidence>
<reference key="1">
    <citation type="journal article" date="1998" name="Science">
        <title>Genome sequence of the nematode C. elegans: a platform for investigating biology.</title>
        <authorList>
            <consortium name="The C. elegans sequencing consortium"/>
        </authorList>
    </citation>
    <scope>NUCLEOTIDE SEQUENCE [LARGE SCALE GENOMIC DNA]</scope>
    <source>
        <strain>Bristol N2</strain>
    </source>
</reference>
<name>MOC2A_CAEEL</name>